<comment type="function">
    <text evidence="1">NDH-1 shuttles electrons from NADH, via FMN and iron-sulfur (Fe-S) centers, to quinones in the respiratory chain. The immediate electron acceptor for the enzyme in this species is believed to be ubiquinone. Couples the redox reaction to proton translocation (for every two electrons transferred, four hydrogen ions are translocated across the cytoplasmic membrane), and thus conserves the redox energy in a proton gradient.</text>
</comment>
<comment type="catalytic activity">
    <reaction evidence="1">
        <text>a quinone + NADH + 5 H(+)(in) = a quinol + NAD(+) + 4 H(+)(out)</text>
        <dbReference type="Rhea" id="RHEA:57888"/>
        <dbReference type="ChEBI" id="CHEBI:15378"/>
        <dbReference type="ChEBI" id="CHEBI:24646"/>
        <dbReference type="ChEBI" id="CHEBI:57540"/>
        <dbReference type="ChEBI" id="CHEBI:57945"/>
        <dbReference type="ChEBI" id="CHEBI:132124"/>
    </reaction>
</comment>
<comment type="subunit">
    <text evidence="1">NDH-1 is composed of 14 different subunits. Subunits NuoA, H, J, K, L, M, N constitute the membrane sector of the complex.</text>
</comment>
<comment type="subcellular location">
    <subcellularLocation>
        <location evidence="1">Cell inner membrane</location>
        <topology evidence="1">Multi-pass membrane protein</topology>
    </subcellularLocation>
</comment>
<comment type="similarity">
    <text evidence="1">Belongs to the complex I subunit 3 family.</text>
</comment>
<gene>
    <name evidence="1" type="primary">nuoA</name>
    <name type="ordered locus">RPB_1347</name>
</gene>
<evidence type="ECO:0000255" key="1">
    <source>
        <dbReference type="HAMAP-Rule" id="MF_01394"/>
    </source>
</evidence>
<accession>Q2J0F3</accession>
<feature type="chain" id="PRO_0000362759" description="NADH-quinone oxidoreductase subunit A">
    <location>
        <begin position="1"/>
        <end position="129"/>
    </location>
</feature>
<feature type="transmembrane region" description="Helical" evidence="1">
    <location>
        <begin position="14"/>
        <end position="34"/>
    </location>
</feature>
<feature type="transmembrane region" description="Helical" evidence="1">
    <location>
        <begin position="67"/>
        <end position="87"/>
    </location>
</feature>
<feature type="transmembrane region" description="Helical" evidence="1">
    <location>
        <begin position="95"/>
        <end position="115"/>
    </location>
</feature>
<sequence>MSDSIFPINPDAALAIHVALSAGIVAAIIVVAALLREKRAGARPDVPYEGGVLPAAPQQGPINAPYFLIAALFVIFDMEVAILFAWAVAARDTGWFGLIEAAVFIGVLLLALVYLWADGALDWHKERKR</sequence>
<keyword id="KW-0997">Cell inner membrane</keyword>
<keyword id="KW-1003">Cell membrane</keyword>
<keyword id="KW-0472">Membrane</keyword>
<keyword id="KW-0520">NAD</keyword>
<keyword id="KW-0874">Quinone</keyword>
<keyword id="KW-1185">Reference proteome</keyword>
<keyword id="KW-1278">Translocase</keyword>
<keyword id="KW-0812">Transmembrane</keyword>
<keyword id="KW-1133">Transmembrane helix</keyword>
<keyword id="KW-0813">Transport</keyword>
<keyword id="KW-0830">Ubiquinone</keyword>
<dbReference type="EC" id="7.1.1.-" evidence="1"/>
<dbReference type="EMBL" id="CP000250">
    <property type="protein sequence ID" value="ABD06057.1"/>
    <property type="molecule type" value="Genomic_DNA"/>
</dbReference>
<dbReference type="RefSeq" id="WP_011440245.1">
    <property type="nucleotide sequence ID" value="NC_007778.1"/>
</dbReference>
<dbReference type="SMR" id="Q2J0F3"/>
<dbReference type="STRING" id="316058.RPB_1347"/>
<dbReference type="KEGG" id="rpb:RPB_1347"/>
<dbReference type="eggNOG" id="COG0838">
    <property type="taxonomic scope" value="Bacteria"/>
</dbReference>
<dbReference type="HOGENOM" id="CLU_119549_2_1_5"/>
<dbReference type="OrthoDB" id="9791970at2"/>
<dbReference type="Proteomes" id="UP000008809">
    <property type="component" value="Chromosome"/>
</dbReference>
<dbReference type="GO" id="GO:0030964">
    <property type="term" value="C:NADH dehydrogenase complex"/>
    <property type="evidence" value="ECO:0007669"/>
    <property type="project" value="TreeGrafter"/>
</dbReference>
<dbReference type="GO" id="GO:0005886">
    <property type="term" value="C:plasma membrane"/>
    <property type="evidence" value="ECO:0007669"/>
    <property type="project" value="UniProtKB-SubCell"/>
</dbReference>
<dbReference type="GO" id="GO:0008137">
    <property type="term" value="F:NADH dehydrogenase (ubiquinone) activity"/>
    <property type="evidence" value="ECO:0007669"/>
    <property type="project" value="InterPro"/>
</dbReference>
<dbReference type="GO" id="GO:0050136">
    <property type="term" value="F:NADH:ubiquinone reductase (non-electrogenic) activity"/>
    <property type="evidence" value="ECO:0007669"/>
    <property type="project" value="UniProtKB-UniRule"/>
</dbReference>
<dbReference type="GO" id="GO:0048038">
    <property type="term" value="F:quinone binding"/>
    <property type="evidence" value="ECO:0007669"/>
    <property type="project" value="UniProtKB-KW"/>
</dbReference>
<dbReference type="Gene3D" id="1.20.58.1610">
    <property type="entry name" value="NADH:ubiquinone/plastoquinone oxidoreductase, chain 3"/>
    <property type="match status" value="1"/>
</dbReference>
<dbReference type="HAMAP" id="MF_01394">
    <property type="entry name" value="NDH1_NuoA"/>
    <property type="match status" value="1"/>
</dbReference>
<dbReference type="InterPro" id="IPR023043">
    <property type="entry name" value="NAD(P)H_OxRDtase_bac/plastid"/>
</dbReference>
<dbReference type="InterPro" id="IPR000440">
    <property type="entry name" value="NADH_UbQ/plastoQ_OxRdtase_su3"/>
</dbReference>
<dbReference type="InterPro" id="IPR038430">
    <property type="entry name" value="NDAH_ubi_oxred_su3_sf"/>
</dbReference>
<dbReference type="PANTHER" id="PTHR11058:SF21">
    <property type="entry name" value="NADH-QUINONE OXIDOREDUCTASE SUBUNIT A"/>
    <property type="match status" value="1"/>
</dbReference>
<dbReference type="PANTHER" id="PTHR11058">
    <property type="entry name" value="NADH-UBIQUINONE OXIDOREDUCTASE CHAIN 3"/>
    <property type="match status" value="1"/>
</dbReference>
<dbReference type="Pfam" id="PF00507">
    <property type="entry name" value="Oxidored_q4"/>
    <property type="match status" value="1"/>
</dbReference>
<protein>
    <recommendedName>
        <fullName evidence="1">NADH-quinone oxidoreductase subunit A</fullName>
        <ecNumber evidence="1">7.1.1.-</ecNumber>
    </recommendedName>
    <alternativeName>
        <fullName evidence="1">NADH dehydrogenase I subunit A</fullName>
    </alternativeName>
    <alternativeName>
        <fullName evidence="1">NDH-1 subunit A</fullName>
    </alternativeName>
    <alternativeName>
        <fullName evidence="1">NUO1</fullName>
    </alternativeName>
</protein>
<proteinExistence type="inferred from homology"/>
<organism>
    <name type="scientific">Rhodopseudomonas palustris (strain HaA2)</name>
    <dbReference type="NCBI Taxonomy" id="316058"/>
    <lineage>
        <taxon>Bacteria</taxon>
        <taxon>Pseudomonadati</taxon>
        <taxon>Pseudomonadota</taxon>
        <taxon>Alphaproteobacteria</taxon>
        <taxon>Hyphomicrobiales</taxon>
        <taxon>Nitrobacteraceae</taxon>
        <taxon>Rhodopseudomonas</taxon>
    </lineage>
</organism>
<name>NUOA_RHOP2</name>
<reference key="1">
    <citation type="submission" date="2006-01" db="EMBL/GenBank/DDBJ databases">
        <title>Complete sequence of Rhodopseudomonas palustris HaA2.</title>
        <authorList>
            <consortium name="US DOE Joint Genome Institute"/>
            <person name="Copeland A."/>
            <person name="Lucas S."/>
            <person name="Lapidus A."/>
            <person name="Barry K."/>
            <person name="Detter J.C."/>
            <person name="Glavina T."/>
            <person name="Hammon N."/>
            <person name="Israni S."/>
            <person name="Pitluck S."/>
            <person name="Chain P."/>
            <person name="Malfatti S."/>
            <person name="Shin M."/>
            <person name="Vergez L."/>
            <person name="Schmutz J."/>
            <person name="Larimer F."/>
            <person name="Land M."/>
            <person name="Hauser L."/>
            <person name="Pelletier D.A."/>
            <person name="Kyrpides N."/>
            <person name="Anderson I."/>
            <person name="Oda Y."/>
            <person name="Harwood C.S."/>
            <person name="Richardson P."/>
        </authorList>
    </citation>
    <scope>NUCLEOTIDE SEQUENCE [LARGE SCALE GENOMIC DNA]</scope>
    <source>
        <strain>HaA2</strain>
    </source>
</reference>